<reference key="1">
    <citation type="journal article" date="2000" name="Nature">
        <title>Sequence and analysis of chromosome 1 of the plant Arabidopsis thaliana.</title>
        <authorList>
            <person name="Theologis A."/>
            <person name="Ecker J.R."/>
            <person name="Palm C.J."/>
            <person name="Federspiel N.A."/>
            <person name="Kaul S."/>
            <person name="White O."/>
            <person name="Alonso J."/>
            <person name="Altafi H."/>
            <person name="Araujo R."/>
            <person name="Bowman C.L."/>
            <person name="Brooks S.Y."/>
            <person name="Buehler E."/>
            <person name="Chan A."/>
            <person name="Chao Q."/>
            <person name="Chen H."/>
            <person name="Cheuk R.F."/>
            <person name="Chin C.W."/>
            <person name="Chung M.K."/>
            <person name="Conn L."/>
            <person name="Conway A.B."/>
            <person name="Conway A.R."/>
            <person name="Creasy T.H."/>
            <person name="Dewar K."/>
            <person name="Dunn P."/>
            <person name="Etgu P."/>
            <person name="Feldblyum T.V."/>
            <person name="Feng J.-D."/>
            <person name="Fong B."/>
            <person name="Fujii C.Y."/>
            <person name="Gill J.E."/>
            <person name="Goldsmith A.D."/>
            <person name="Haas B."/>
            <person name="Hansen N.F."/>
            <person name="Hughes B."/>
            <person name="Huizar L."/>
            <person name="Hunter J.L."/>
            <person name="Jenkins J."/>
            <person name="Johnson-Hopson C."/>
            <person name="Khan S."/>
            <person name="Khaykin E."/>
            <person name="Kim C.J."/>
            <person name="Koo H.L."/>
            <person name="Kremenetskaia I."/>
            <person name="Kurtz D.B."/>
            <person name="Kwan A."/>
            <person name="Lam B."/>
            <person name="Langin-Hooper S."/>
            <person name="Lee A."/>
            <person name="Lee J.M."/>
            <person name="Lenz C.A."/>
            <person name="Li J.H."/>
            <person name="Li Y.-P."/>
            <person name="Lin X."/>
            <person name="Liu S.X."/>
            <person name="Liu Z.A."/>
            <person name="Luros J.S."/>
            <person name="Maiti R."/>
            <person name="Marziali A."/>
            <person name="Militscher J."/>
            <person name="Miranda M."/>
            <person name="Nguyen M."/>
            <person name="Nierman W.C."/>
            <person name="Osborne B.I."/>
            <person name="Pai G."/>
            <person name="Peterson J."/>
            <person name="Pham P.K."/>
            <person name="Rizzo M."/>
            <person name="Rooney T."/>
            <person name="Rowley D."/>
            <person name="Sakano H."/>
            <person name="Salzberg S.L."/>
            <person name="Schwartz J.R."/>
            <person name="Shinn P."/>
            <person name="Southwick A.M."/>
            <person name="Sun H."/>
            <person name="Tallon L.J."/>
            <person name="Tambunga G."/>
            <person name="Toriumi M.J."/>
            <person name="Town C.D."/>
            <person name="Utterback T."/>
            <person name="Van Aken S."/>
            <person name="Vaysberg M."/>
            <person name="Vysotskaia V.S."/>
            <person name="Walker M."/>
            <person name="Wu D."/>
            <person name="Yu G."/>
            <person name="Fraser C.M."/>
            <person name="Venter J.C."/>
            <person name="Davis R.W."/>
        </authorList>
    </citation>
    <scope>NUCLEOTIDE SEQUENCE [LARGE SCALE GENOMIC DNA]</scope>
    <source>
        <strain>cv. Columbia</strain>
    </source>
</reference>
<reference key="2">
    <citation type="journal article" date="2017" name="Plant J.">
        <title>Araport11: a complete reannotation of the Arabidopsis thaliana reference genome.</title>
        <authorList>
            <person name="Cheng C.Y."/>
            <person name="Krishnakumar V."/>
            <person name="Chan A.P."/>
            <person name="Thibaud-Nissen F."/>
            <person name="Schobel S."/>
            <person name="Town C.D."/>
        </authorList>
    </citation>
    <scope>GENOME REANNOTATION</scope>
    <source>
        <strain>cv. Columbia</strain>
    </source>
</reference>
<reference key="3">
    <citation type="journal article" date="2006" name="Plant Biotechnol. J.">
        <title>Simultaneous high-throughput recombinational cloning of open reading frames in closed and open configurations.</title>
        <authorList>
            <person name="Underwood B.A."/>
            <person name="Vanderhaeghen R."/>
            <person name="Whitford R."/>
            <person name="Town C.D."/>
            <person name="Hilson P."/>
        </authorList>
    </citation>
    <scope>NUCLEOTIDE SEQUENCE [LARGE SCALE MRNA] (ISOFORM 2)</scope>
    <source>
        <strain>cv. Columbia</strain>
    </source>
</reference>
<reference key="4">
    <citation type="journal article" date="2004" name="Plant Cell">
        <title>Genome-wide analysis of Arabidopsis pentatricopeptide repeat proteins reveals their essential role in organelle biogenesis.</title>
        <authorList>
            <person name="Lurin C."/>
            <person name="Andres C."/>
            <person name="Aubourg S."/>
            <person name="Bellaoui M."/>
            <person name="Bitton F."/>
            <person name="Bruyere C."/>
            <person name="Caboche M."/>
            <person name="Debast C."/>
            <person name="Gualberto J."/>
            <person name="Hoffmann B."/>
            <person name="Lecharny A."/>
            <person name="Le Ret M."/>
            <person name="Martin-Magniette M.-L."/>
            <person name="Mireau H."/>
            <person name="Peeters N."/>
            <person name="Renou J.-P."/>
            <person name="Szurek B."/>
            <person name="Taconnat L."/>
            <person name="Small I."/>
        </authorList>
    </citation>
    <scope>GENE FAMILY</scope>
</reference>
<organism>
    <name type="scientific">Arabidopsis thaliana</name>
    <name type="common">Mouse-ear cress</name>
    <dbReference type="NCBI Taxonomy" id="3702"/>
    <lineage>
        <taxon>Eukaryota</taxon>
        <taxon>Viridiplantae</taxon>
        <taxon>Streptophyta</taxon>
        <taxon>Embryophyta</taxon>
        <taxon>Tracheophyta</taxon>
        <taxon>Spermatophyta</taxon>
        <taxon>Magnoliopsida</taxon>
        <taxon>eudicotyledons</taxon>
        <taxon>Gunneridae</taxon>
        <taxon>Pentapetalae</taxon>
        <taxon>rosids</taxon>
        <taxon>malvids</taxon>
        <taxon>Brassicales</taxon>
        <taxon>Brassicaceae</taxon>
        <taxon>Camelineae</taxon>
        <taxon>Arabidopsis</taxon>
    </lineage>
</organism>
<proteinExistence type="evidence at transcript level"/>
<keyword id="KW-0025">Alternative splicing</keyword>
<keyword id="KW-0496">Mitochondrion</keyword>
<keyword id="KW-1185">Reference proteome</keyword>
<keyword id="KW-0677">Repeat</keyword>
<keyword id="KW-0809">Transit peptide</keyword>
<gene>
    <name type="ordered locus">At1g63070</name>
    <name type="ORF">F16M19.15</name>
</gene>
<accession>Q9CAN6</accession>
<accession>Q1PFH3</accession>
<dbReference type="EMBL" id="AC010795">
    <property type="protein sequence ID" value="AAG51617.1"/>
    <property type="molecule type" value="Genomic_DNA"/>
</dbReference>
<dbReference type="EMBL" id="CP002684">
    <property type="protein sequence ID" value="AEE34050.1"/>
    <property type="molecule type" value="Genomic_DNA"/>
</dbReference>
<dbReference type="EMBL" id="DQ446390">
    <property type="protein sequence ID" value="ABE65736.1"/>
    <property type="molecule type" value="mRNA"/>
</dbReference>
<dbReference type="PIR" id="A96656">
    <property type="entry name" value="A96656"/>
</dbReference>
<dbReference type="RefSeq" id="NP_176495.1">
    <molecule id="Q9CAN6-1"/>
    <property type="nucleotide sequence ID" value="NM_104985.1"/>
</dbReference>
<dbReference type="SMR" id="Q9CAN6"/>
<dbReference type="STRING" id="3702.Q9CAN6"/>
<dbReference type="iPTMnet" id="Q9CAN6"/>
<dbReference type="PaxDb" id="3702-AT1G63070.1"/>
<dbReference type="EnsemblPlants" id="AT1G63070.1">
    <molecule id="Q9CAN6-1"/>
    <property type="protein sequence ID" value="AT1G63070.1"/>
    <property type="gene ID" value="AT1G63070"/>
</dbReference>
<dbReference type="GeneID" id="842610"/>
<dbReference type="Gramene" id="AT1G63070.1">
    <molecule id="Q9CAN6-1"/>
    <property type="protein sequence ID" value="AT1G63070.1"/>
    <property type="gene ID" value="AT1G63070"/>
</dbReference>
<dbReference type="KEGG" id="ath:AT1G63070"/>
<dbReference type="Araport" id="AT1G63070"/>
<dbReference type="TAIR" id="AT1G63070"/>
<dbReference type="eggNOG" id="KOG4197">
    <property type="taxonomic scope" value="Eukaryota"/>
</dbReference>
<dbReference type="HOGENOM" id="CLU_002706_49_0_1"/>
<dbReference type="InParanoid" id="Q9CAN6"/>
<dbReference type="OMA" id="MELQGGT"/>
<dbReference type="PhylomeDB" id="Q9CAN6"/>
<dbReference type="PRO" id="PR:Q9CAN6"/>
<dbReference type="Proteomes" id="UP000006548">
    <property type="component" value="Chromosome 1"/>
</dbReference>
<dbReference type="GO" id="GO:0005739">
    <property type="term" value="C:mitochondrion"/>
    <property type="evidence" value="ECO:0007669"/>
    <property type="project" value="UniProtKB-SubCell"/>
</dbReference>
<dbReference type="FunFam" id="1.25.40.10:FF:003300">
    <property type="entry name" value="Pentatricopeptide repeat-containing protein At1g62590"/>
    <property type="match status" value="1"/>
</dbReference>
<dbReference type="Gene3D" id="1.25.40.10">
    <property type="entry name" value="Tetratricopeptide repeat domain"/>
    <property type="match status" value="5"/>
</dbReference>
<dbReference type="InterPro" id="IPR002885">
    <property type="entry name" value="Pentatricopeptide_rpt"/>
</dbReference>
<dbReference type="InterPro" id="IPR051222">
    <property type="entry name" value="PPR/CCM1_RNA-binding"/>
</dbReference>
<dbReference type="InterPro" id="IPR011990">
    <property type="entry name" value="TPR-like_helical_dom_sf"/>
</dbReference>
<dbReference type="NCBIfam" id="TIGR00756">
    <property type="entry name" value="PPR"/>
    <property type="match status" value="13"/>
</dbReference>
<dbReference type="PANTHER" id="PTHR47942:SF16">
    <property type="entry name" value="PENTATRICOPEPTIDE REPEAT DOMAIN CONTAINING PROTEIN-RELATED"/>
    <property type="match status" value="1"/>
</dbReference>
<dbReference type="PANTHER" id="PTHR47942">
    <property type="entry name" value="TETRATRICOPEPTIDE REPEAT (TPR)-LIKE SUPERFAMILY PROTEIN-RELATED"/>
    <property type="match status" value="1"/>
</dbReference>
<dbReference type="Pfam" id="PF01535">
    <property type="entry name" value="PPR"/>
    <property type="match status" value="1"/>
</dbReference>
<dbReference type="Pfam" id="PF12854">
    <property type="entry name" value="PPR_1"/>
    <property type="match status" value="3"/>
</dbReference>
<dbReference type="Pfam" id="PF13041">
    <property type="entry name" value="PPR_2"/>
    <property type="match status" value="5"/>
</dbReference>
<dbReference type="SUPFAM" id="SSF81901">
    <property type="entry name" value="HCP-like"/>
    <property type="match status" value="1"/>
</dbReference>
<dbReference type="PROSITE" id="PS51375">
    <property type="entry name" value="PPR"/>
    <property type="match status" value="14"/>
</dbReference>
<feature type="transit peptide" description="Mitochondrion" evidence="1">
    <location>
        <begin position="1"/>
        <end position="34"/>
    </location>
</feature>
<feature type="chain" id="PRO_0000342838" description="Pentatricopeptide repeat-containing protein At1g63070, mitochondrial">
    <location>
        <begin position="35"/>
        <end position="590"/>
    </location>
</feature>
<feature type="repeat" description="PPR 1">
    <location>
        <begin position="74"/>
        <end position="108"/>
    </location>
</feature>
<feature type="repeat" description="PPR 2">
    <location>
        <begin position="109"/>
        <end position="143"/>
    </location>
</feature>
<feature type="repeat" description="PPR 3">
    <location>
        <begin position="144"/>
        <end position="178"/>
    </location>
</feature>
<feature type="repeat" description="PPR 4">
    <location>
        <begin position="179"/>
        <end position="213"/>
    </location>
</feature>
<feature type="repeat" description="PPR 5">
    <location>
        <begin position="214"/>
        <end position="248"/>
    </location>
</feature>
<feature type="repeat" description="PPR 6">
    <location>
        <begin position="249"/>
        <end position="283"/>
    </location>
</feature>
<feature type="repeat" description="PPR 7">
    <location>
        <begin position="284"/>
        <end position="318"/>
    </location>
</feature>
<feature type="repeat" description="PPR 8">
    <location>
        <begin position="319"/>
        <end position="353"/>
    </location>
</feature>
<feature type="repeat" description="PPR 9">
    <location>
        <begin position="355"/>
        <end position="389"/>
    </location>
</feature>
<feature type="repeat" description="PPR 10">
    <location>
        <begin position="390"/>
        <end position="424"/>
    </location>
</feature>
<feature type="repeat" description="PPR 11">
    <location>
        <begin position="425"/>
        <end position="459"/>
    </location>
</feature>
<feature type="repeat" description="PPR 12">
    <location>
        <begin position="460"/>
        <end position="494"/>
    </location>
</feature>
<feature type="repeat" description="PPR 13">
    <location>
        <begin position="495"/>
        <end position="529"/>
    </location>
</feature>
<feature type="repeat" description="PPR 14">
    <location>
        <begin position="530"/>
        <end position="564"/>
    </location>
</feature>
<feature type="splice variant" id="VSP_034547" description="In isoform 2." evidence="2">
    <original>SKHCFPDVVAYN</original>
    <variation>RSIDPSFVCTIV</variation>
    <location>
        <begin position="349"/>
        <end position="360"/>
    </location>
</feature>
<feature type="splice variant" id="VSP_034548" description="In isoform 2." evidence="2">
    <location>
        <begin position="361"/>
        <end position="590"/>
    </location>
</feature>
<protein>
    <recommendedName>
        <fullName>Pentatricopeptide repeat-containing protein At1g63070, mitochondrial</fullName>
    </recommendedName>
</protein>
<comment type="subcellular location">
    <subcellularLocation>
        <location evidence="3">Mitochondrion</location>
    </subcellularLocation>
</comment>
<comment type="alternative products">
    <event type="alternative splicing"/>
    <isoform>
        <id>Q9CAN6-1</id>
        <name>1</name>
        <sequence type="displayed"/>
    </isoform>
    <isoform>
        <id>Q9CAN6-2</id>
        <name>2</name>
        <sequence type="described" ref="VSP_034547 VSP_034548"/>
    </isoform>
</comment>
<comment type="miscellaneous">
    <molecule>Isoform 2</molecule>
    <text evidence="3">May be due to intron retention.</text>
</comment>
<comment type="similarity">
    <text evidence="3">Belongs to the PPR family. P subfamily.</text>
</comment>
<comment type="online information" name="Pentatricopeptide repeat proteins">
    <link uri="https://ppr.plantenergy.uwa.edu.au"/>
</comment>
<name>PPR97_ARATH</name>
<sequence length="590" mass="66072">MMRSVAVIGKKCLHRHTVLLKGNPRTTLCWERSFAGASSDDCRENLSRKVLQDLKLDDAIGLFGDMVKSRPFPSIVEFSKLLSAIAKMNKFDLVISLGEQMQNLGISHNLYTYSIFINYFCRRSQLSLALAILGKMMKLGYGPSIVTLNSLLNGFCHGNRISEAVALVDQMVEMGYQPDTVTFTTLVHGLFQHNKASEAVALVERMVVKGCQPDLVTYGAVINGLCKRGEPDLALNLLNKMEKGKIEADVVIYNTIIDGLCKYKHMDDAFDLFNKMETKGIKPDVFTYNPLISCLCNYGRWSDASRLLSDMLEKNINPDLVFFNALIDAFVKEGKLVEAEKLYDEMVKSKHCFPDVVAYNTLIKGFCKYKRVEEGMEVFREMSQRGLVGNTVTYTTLIHGFFQARDCDNAQMVFKQMVSDGVHPDIMTYNILLDGLCNNGNVETALVVFEYMQKRDMKLDIVTYTTMIEALCKAGKVEDGWDLFCSLSLKGVKPNVVTYTTMMSGFCRKGLKEEADALFVEMKEDGPLPNSGTYNTLIRARLRDGDEAASAELIKEMRSCGFAGDASTFGLVTNMLHDGRLDKSFLDMLS</sequence>
<evidence type="ECO:0000255" key="1"/>
<evidence type="ECO:0000303" key="2">
    <source>
    </source>
</evidence>
<evidence type="ECO:0000305" key="3"/>